<sequence length="423" mass="46232">MTDKRKDGSGKLLYCSFCGKSQHEVRKLIAGPSVYICDECVDLCNDIIREEIKEVAPHRERSALPTPHEIRIHLDDYVIGQEQAKKVLAVAVYNHYKRLRNGDTSNGVELGKSNILLIGPTGSGKTLLAETLARLLDVPFTMADATTLTEAGYVGEDVENIIQKLLQKCDYDVQKAQRGIVYIDEIDKISRKSDNPSITRDVSGEGVQQALLKLIEGTVAAVPPQGGRKHPQQEFLQVDTSKILFICGGAFAGLDKVIANRVETGSGIGFGATVKAKSDKASEGELLSQVEPEDLIKFGLIPEFIGRLPVVATLNELSEEALIQILKEPKNALTKQYQALFNLEGVDLEFRDEALDAIARKAMARKTGARGLRSIVEAALLDTMYDLPSMEDVEKVVIDESVIDGQSKPLLIYGKPEAQASGE</sequence>
<gene>
    <name evidence="1" type="primary">clpX</name>
    <name type="ordered locus">SARI_02485</name>
</gene>
<organism>
    <name type="scientific">Salmonella arizonae (strain ATCC BAA-731 / CDC346-86 / RSK2980)</name>
    <dbReference type="NCBI Taxonomy" id="41514"/>
    <lineage>
        <taxon>Bacteria</taxon>
        <taxon>Pseudomonadati</taxon>
        <taxon>Pseudomonadota</taxon>
        <taxon>Gammaproteobacteria</taxon>
        <taxon>Enterobacterales</taxon>
        <taxon>Enterobacteriaceae</taxon>
        <taxon>Salmonella</taxon>
    </lineage>
</organism>
<dbReference type="EMBL" id="CP000880">
    <property type="protein sequence ID" value="ABX22344.1"/>
    <property type="molecule type" value="Genomic_DNA"/>
</dbReference>
<dbReference type="SMR" id="A9MM22"/>
<dbReference type="STRING" id="41514.SARI_02485"/>
<dbReference type="KEGG" id="ses:SARI_02485"/>
<dbReference type="HOGENOM" id="CLU_014218_8_2_6"/>
<dbReference type="Proteomes" id="UP000002084">
    <property type="component" value="Chromosome"/>
</dbReference>
<dbReference type="GO" id="GO:0009376">
    <property type="term" value="C:HslUV protease complex"/>
    <property type="evidence" value="ECO:0007669"/>
    <property type="project" value="TreeGrafter"/>
</dbReference>
<dbReference type="GO" id="GO:0005524">
    <property type="term" value="F:ATP binding"/>
    <property type="evidence" value="ECO:0007669"/>
    <property type="project" value="UniProtKB-UniRule"/>
</dbReference>
<dbReference type="GO" id="GO:0016887">
    <property type="term" value="F:ATP hydrolysis activity"/>
    <property type="evidence" value="ECO:0007669"/>
    <property type="project" value="InterPro"/>
</dbReference>
<dbReference type="GO" id="GO:0140662">
    <property type="term" value="F:ATP-dependent protein folding chaperone"/>
    <property type="evidence" value="ECO:0007669"/>
    <property type="project" value="InterPro"/>
</dbReference>
<dbReference type="GO" id="GO:0046983">
    <property type="term" value="F:protein dimerization activity"/>
    <property type="evidence" value="ECO:0007669"/>
    <property type="project" value="InterPro"/>
</dbReference>
<dbReference type="GO" id="GO:0051082">
    <property type="term" value="F:unfolded protein binding"/>
    <property type="evidence" value="ECO:0007669"/>
    <property type="project" value="UniProtKB-UniRule"/>
</dbReference>
<dbReference type="GO" id="GO:0008270">
    <property type="term" value="F:zinc ion binding"/>
    <property type="evidence" value="ECO:0007669"/>
    <property type="project" value="InterPro"/>
</dbReference>
<dbReference type="GO" id="GO:0051301">
    <property type="term" value="P:cell division"/>
    <property type="evidence" value="ECO:0007669"/>
    <property type="project" value="TreeGrafter"/>
</dbReference>
<dbReference type="GO" id="GO:0051603">
    <property type="term" value="P:proteolysis involved in protein catabolic process"/>
    <property type="evidence" value="ECO:0007669"/>
    <property type="project" value="TreeGrafter"/>
</dbReference>
<dbReference type="CDD" id="cd19497">
    <property type="entry name" value="RecA-like_ClpX"/>
    <property type="match status" value="1"/>
</dbReference>
<dbReference type="FunFam" id="1.10.8.60:FF:000002">
    <property type="entry name" value="ATP-dependent Clp protease ATP-binding subunit ClpX"/>
    <property type="match status" value="1"/>
</dbReference>
<dbReference type="FunFam" id="3.40.50.300:FF:000005">
    <property type="entry name" value="ATP-dependent Clp protease ATP-binding subunit ClpX"/>
    <property type="match status" value="1"/>
</dbReference>
<dbReference type="Gene3D" id="1.10.8.60">
    <property type="match status" value="1"/>
</dbReference>
<dbReference type="Gene3D" id="6.20.220.10">
    <property type="entry name" value="ClpX chaperone, C4-type zinc finger domain"/>
    <property type="match status" value="1"/>
</dbReference>
<dbReference type="Gene3D" id="3.40.50.300">
    <property type="entry name" value="P-loop containing nucleotide triphosphate hydrolases"/>
    <property type="match status" value="1"/>
</dbReference>
<dbReference type="HAMAP" id="MF_00175">
    <property type="entry name" value="ClpX"/>
    <property type="match status" value="1"/>
</dbReference>
<dbReference type="InterPro" id="IPR003593">
    <property type="entry name" value="AAA+_ATPase"/>
</dbReference>
<dbReference type="InterPro" id="IPR050052">
    <property type="entry name" value="ATP-dep_Clp_protease_ClpX"/>
</dbReference>
<dbReference type="InterPro" id="IPR003959">
    <property type="entry name" value="ATPase_AAA_core"/>
</dbReference>
<dbReference type="InterPro" id="IPR019489">
    <property type="entry name" value="Clp_ATPase_C"/>
</dbReference>
<dbReference type="InterPro" id="IPR004487">
    <property type="entry name" value="Clp_protease_ATP-bd_su_ClpX"/>
</dbReference>
<dbReference type="InterPro" id="IPR046425">
    <property type="entry name" value="ClpX_bact"/>
</dbReference>
<dbReference type="InterPro" id="IPR027417">
    <property type="entry name" value="P-loop_NTPase"/>
</dbReference>
<dbReference type="InterPro" id="IPR010603">
    <property type="entry name" value="Znf_CppX_C4"/>
</dbReference>
<dbReference type="InterPro" id="IPR038366">
    <property type="entry name" value="Znf_CppX_C4_sf"/>
</dbReference>
<dbReference type="NCBIfam" id="TIGR00382">
    <property type="entry name" value="clpX"/>
    <property type="match status" value="1"/>
</dbReference>
<dbReference type="NCBIfam" id="NF003745">
    <property type="entry name" value="PRK05342.1"/>
    <property type="match status" value="1"/>
</dbReference>
<dbReference type="PANTHER" id="PTHR48102:SF7">
    <property type="entry name" value="ATP-DEPENDENT CLP PROTEASE ATP-BINDING SUBUNIT CLPX-LIKE, MITOCHONDRIAL"/>
    <property type="match status" value="1"/>
</dbReference>
<dbReference type="PANTHER" id="PTHR48102">
    <property type="entry name" value="ATP-DEPENDENT CLP PROTEASE ATP-BINDING SUBUNIT CLPX-LIKE, MITOCHONDRIAL-RELATED"/>
    <property type="match status" value="1"/>
</dbReference>
<dbReference type="Pfam" id="PF07724">
    <property type="entry name" value="AAA_2"/>
    <property type="match status" value="1"/>
</dbReference>
<dbReference type="Pfam" id="PF10431">
    <property type="entry name" value="ClpB_D2-small"/>
    <property type="match status" value="1"/>
</dbReference>
<dbReference type="Pfam" id="PF06689">
    <property type="entry name" value="zf-C4_ClpX"/>
    <property type="match status" value="1"/>
</dbReference>
<dbReference type="SMART" id="SM00382">
    <property type="entry name" value="AAA"/>
    <property type="match status" value="1"/>
</dbReference>
<dbReference type="SMART" id="SM01086">
    <property type="entry name" value="ClpB_D2-small"/>
    <property type="match status" value="1"/>
</dbReference>
<dbReference type="SMART" id="SM00994">
    <property type="entry name" value="zf-C4_ClpX"/>
    <property type="match status" value="1"/>
</dbReference>
<dbReference type="SUPFAM" id="SSF57716">
    <property type="entry name" value="Glucocorticoid receptor-like (DNA-binding domain)"/>
    <property type="match status" value="1"/>
</dbReference>
<dbReference type="SUPFAM" id="SSF52540">
    <property type="entry name" value="P-loop containing nucleoside triphosphate hydrolases"/>
    <property type="match status" value="1"/>
</dbReference>
<dbReference type="PROSITE" id="PS51902">
    <property type="entry name" value="CLPX_ZB"/>
    <property type="match status" value="1"/>
</dbReference>
<name>CLPX_SALAR</name>
<evidence type="ECO:0000255" key="1">
    <source>
        <dbReference type="HAMAP-Rule" id="MF_00175"/>
    </source>
</evidence>
<evidence type="ECO:0000255" key="2">
    <source>
        <dbReference type="PROSITE-ProRule" id="PRU01250"/>
    </source>
</evidence>
<accession>A9MM22</accession>
<feature type="chain" id="PRO_1000077172" description="ATP-dependent Clp protease ATP-binding subunit ClpX">
    <location>
        <begin position="1"/>
        <end position="423"/>
    </location>
</feature>
<feature type="domain" description="ClpX-type ZB" evidence="2">
    <location>
        <begin position="2"/>
        <end position="56"/>
    </location>
</feature>
<feature type="binding site" evidence="2">
    <location>
        <position position="15"/>
    </location>
    <ligand>
        <name>Zn(2+)</name>
        <dbReference type="ChEBI" id="CHEBI:29105"/>
    </ligand>
</feature>
<feature type="binding site" evidence="2">
    <location>
        <position position="18"/>
    </location>
    <ligand>
        <name>Zn(2+)</name>
        <dbReference type="ChEBI" id="CHEBI:29105"/>
    </ligand>
</feature>
<feature type="binding site" evidence="2">
    <location>
        <position position="37"/>
    </location>
    <ligand>
        <name>Zn(2+)</name>
        <dbReference type="ChEBI" id="CHEBI:29105"/>
    </ligand>
</feature>
<feature type="binding site" evidence="2">
    <location>
        <position position="40"/>
    </location>
    <ligand>
        <name>Zn(2+)</name>
        <dbReference type="ChEBI" id="CHEBI:29105"/>
    </ligand>
</feature>
<feature type="binding site" evidence="1">
    <location>
        <begin position="120"/>
        <end position="127"/>
    </location>
    <ligand>
        <name>ATP</name>
        <dbReference type="ChEBI" id="CHEBI:30616"/>
    </ligand>
</feature>
<protein>
    <recommendedName>
        <fullName evidence="1">ATP-dependent Clp protease ATP-binding subunit ClpX</fullName>
    </recommendedName>
</protein>
<comment type="function">
    <text evidence="1">ATP-dependent specificity component of the Clp protease. It directs the protease to specific substrates. Can perform chaperone functions in the absence of ClpP.</text>
</comment>
<comment type="subunit">
    <text evidence="1">Component of the ClpX-ClpP complex. Forms a hexameric ring that, in the presence of ATP, binds to fourteen ClpP subunits assembled into a disk-like structure with a central cavity, resembling the structure of eukaryotic proteasomes.</text>
</comment>
<comment type="similarity">
    <text evidence="1">Belongs to the ClpX chaperone family.</text>
</comment>
<keyword id="KW-0067">ATP-binding</keyword>
<keyword id="KW-0143">Chaperone</keyword>
<keyword id="KW-0479">Metal-binding</keyword>
<keyword id="KW-0547">Nucleotide-binding</keyword>
<keyword id="KW-1185">Reference proteome</keyword>
<keyword id="KW-0862">Zinc</keyword>
<reference key="1">
    <citation type="submission" date="2007-11" db="EMBL/GenBank/DDBJ databases">
        <authorList>
            <consortium name="The Salmonella enterica serovar Arizonae Genome Sequencing Project"/>
            <person name="McClelland M."/>
            <person name="Sanderson E.K."/>
            <person name="Porwollik S."/>
            <person name="Spieth J."/>
            <person name="Clifton W.S."/>
            <person name="Fulton R."/>
            <person name="Chunyan W."/>
            <person name="Wollam A."/>
            <person name="Shah N."/>
            <person name="Pepin K."/>
            <person name="Bhonagiri V."/>
            <person name="Nash W."/>
            <person name="Johnson M."/>
            <person name="Thiruvilangam P."/>
            <person name="Wilson R."/>
        </authorList>
    </citation>
    <scope>NUCLEOTIDE SEQUENCE [LARGE SCALE GENOMIC DNA]</scope>
    <source>
        <strain>ATCC BAA-731 / CDC346-86 / RSK2980</strain>
    </source>
</reference>
<proteinExistence type="inferred from homology"/>